<name>COAA_STRP4</name>
<dbReference type="EC" id="2.7.1.33" evidence="1"/>
<dbReference type="EMBL" id="CP001015">
    <property type="protein sequence ID" value="ACF56450.1"/>
    <property type="molecule type" value="Genomic_DNA"/>
</dbReference>
<dbReference type="SMR" id="B5E3L1"/>
<dbReference type="KEGG" id="spx:SPG_0759"/>
<dbReference type="HOGENOM" id="CLU_053818_1_1_9"/>
<dbReference type="UniPathway" id="UPA00241">
    <property type="reaction ID" value="UER00352"/>
</dbReference>
<dbReference type="GO" id="GO:0005737">
    <property type="term" value="C:cytoplasm"/>
    <property type="evidence" value="ECO:0007669"/>
    <property type="project" value="UniProtKB-SubCell"/>
</dbReference>
<dbReference type="GO" id="GO:0005524">
    <property type="term" value="F:ATP binding"/>
    <property type="evidence" value="ECO:0007669"/>
    <property type="project" value="UniProtKB-UniRule"/>
</dbReference>
<dbReference type="GO" id="GO:0004594">
    <property type="term" value="F:pantothenate kinase activity"/>
    <property type="evidence" value="ECO:0007669"/>
    <property type="project" value="UniProtKB-UniRule"/>
</dbReference>
<dbReference type="GO" id="GO:0015937">
    <property type="term" value="P:coenzyme A biosynthetic process"/>
    <property type="evidence" value="ECO:0007669"/>
    <property type="project" value="UniProtKB-UniRule"/>
</dbReference>
<dbReference type="CDD" id="cd02025">
    <property type="entry name" value="PanK"/>
    <property type="match status" value="1"/>
</dbReference>
<dbReference type="FunFam" id="3.40.50.300:FF:001646">
    <property type="entry name" value="Pantothenate kinase"/>
    <property type="match status" value="1"/>
</dbReference>
<dbReference type="Gene3D" id="3.40.50.300">
    <property type="entry name" value="P-loop containing nucleotide triphosphate hydrolases"/>
    <property type="match status" value="1"/>
</dbReference>
<dbReference type="HAMAP" id="MF_00215">
    <property type="entry name" value="Pantothen_kinase_1"/>
    <property type="match status" value="1"/>
</dbReference>
<dbReference type="InterPro" id="IPR027417">
    <property type="entry name" value="P-loop_NTPase"/>
</dbReference>
<dbReference type="InterPro" id="IPR004566">
    <property type="entry name" value="PanK"/>
</dbReference>
<dbReference type="InterPro" id="IPR006083">
    <property type="entry name" value="PRK/URK"/>
</dbReference>
<dbReference type="NCBIfam" id="TIGR00554">
    <property type="entry name" value="panK_bact"/>
    <property type="match status" value="1"/>
</dbReference>
<dbReference type="PANTHER" id="PTHR10285">
    <property type="entry name" value="URIDINE KINASE"/>
    <property type="match status" value="1"/>
</dbReference>
<dbReference type="Pfam" id="PF00485">
    <property type="entry name" value="PRK"/>
    <property type="match status" value="1"/>
</dbReference>
<dbReference type="PIRSF" id="PIRSF000545">
    <property type="entry name" value="Pantothenate_kin"/>
    <property type="match status" value="1"/>
</dbReference>
<dbReference type="SUPFAM" id="SSF52540">
    <property type="entry name" value="P-loop containing nucleoside triphosphate hydrolases"/>
    <property type="match status" value="1"/>
</dbReference>
<gene>
    <name evidence="1" type="primary">coaA</name>
    <name type="ordered locus">SPG_0759</name>
</gene>
<accession>B5E3L1</accession>
<protein>
    <recommendedName>
        <fullName evidence="1">Pantothenate kinase</fullName>
        <ecNumber evidence="1">2.7.1.33</ecNumber>
    </recommendedName>
    <alternativeName>
        <fullName evidence="1">Pantothenic acid kinase</fullName>
    </alternativeName>
</protein>
<feature type="chain" id="PRO_1000099954" description="Pantothenate kinase">
    <location>
        <begin position="1"/>
        <end position="306"/>
    </location>
</feature>
<feature type="binding site" evidence="1">
    <location>
        <begin position="91"/>
        <end position="98"/>
    </location>
    <ligand>
        <name>ATP</name>
        <dbReference type="ChEBI" id="CHEBI:30616"/>
    </ligand>
</feature>
<comment type="catalytic activity">
    <reaction evidence="1">
        <text>(R)-pantothenate + ATP = (R)-4'-phosphopantothenate + ADP + H(+)</text>
        <dbReference type="Rhea" id="RHEA:16373"/>
        <dbReference type="ChEBI" id="CHEBI:10986"/>
        <dbReference type="ChEBI" id="CHEBI:15378"/>
        <dbReference type="ChEBI" id="CHEBI:29032"/>
        <dbReference type="ChEBI" id="CHEBI:30616"/>
        <dbReference type="ChEBI" id="CHEBI:456216"/>
        <dbReference type="EC" id="2.7.1.33"/>
    </reaction>
</comment>
<comment type="pathway">
    <text evidence="1">Cofactor biosynthesis; coenzyme A biosynthesis; CoA from (R)-pantothenate: step 1/5.</text>
</comment>
<comment type="subcellular location">
    <subcellularLocation>
        <location evidence="1">Cytoplasm</location>
    </subcellularLocation>
</comment>
<comment type="similarity">
    <text evidence="1">Belongs to the prokaryotic pantothenate kinase family.</text>
</comment>
<proteinExistence type="inferred from homology"/>
<sequence>MTNEFLHFEKISRQTWQSLHRKTTPPLTEEELESIKSFNDQISLQDVTDIYLPLAHLIQIYKRTKEDLAFSKGIFLQRESKSQPFIIGVSGSVAVGKSTTSRLLQILLSRTVTDATVELVTTDGFLYPNQTLIEQGILNRKGFPESYDMEALLNFLDRIKNGQDVDIPVYSHEVYDIVPEKKQSVKAADFVIVEGINVFQNPQNDRLYITDFFDFSIYVDAGVDDIESWYLDRFLKMLSLAQNDPDSYYYRFTQMPIGEVESFAHQVWISINLTNLQNYIEPTRNRAEVILHKSKNHEIDEIYLKK</sequence>
<organism>
    <name type="scientific">Streptococcus pneumoniae serotype 19F (strain G54)</name>
    <dbReference type="NCBI Taxonomy" id="512566"/>
    <lineage>
        <taxon>Bacteria</taxon>
        <taxon>Bacillati</taxon>
        <taxon>Bacillota</taxon>
        <taxon>Bacilli</taxon>
        <taxon>Lactobacillales</taxon>
        <taxon>Streptococcaceae</taxon>
        <taxon>Streptococcus</taxon>
    </lineage>
</organism>
<evidence type="ECO:0000255" key="1">
    <source>
        <dbReference type="HAMAP-Rule" id="MF_00215"/>
    </source>
</evidence>
<keyword id="KW-0067">ATP-binding</keyword>
<keyword id="KW-0173">Coenzyme A biosynthesis</keyword>
<keyword id="KW-0963">Cytoplasm</keyword>
<keyword id="KW-0418">Kinase</keyword>
<keyword id="KW-0547">Nucleotide-binding</keyword>
<keyword id="KW-0808">Transferase</keyword>
<reference key="1">
    <citation type="journal article" date="2001" name="Microb. Drug Resist.">
        <title>Annotated draft genomic sequence from a Streptococcus pneumoniae type 19F clinical isolate.</title>
        <authorList>
            <person name="Dopazo J."/>
            <person name="Mendoza A."/>
            <person name="Herrero J."/>
            <person name="Caldara F."/>
            <person name="Humbert Y."/>
            <person name="Friedli L."/>
            <person name="Guerrier M."/>
            <person name="Grand-Schenk E."/>
            <person name="Gandin C."/>
            <person name="de Francesco M."/>
            <person name="Polissi A."/>
            <person name="Buell G."/>
            <person name="Feger G."/>
            <person name="Garcia E."/>
            <person name="Peitsch M."/>
            <person name="Garcia-Bustos J.F."/>
        </authorList>
    </citation>
    <scope>NUCLEOTIDE SEQUENCE [LARGE SCALE GENOMIC DNA]</scope>
    <source>
        <strain>G54</strain>
    </source>
</reference>
<reference key="2">
    <citation type="submission" date="2008-03" db="EMBL/GenBank/DDBJ databases">
        <title>Pneumococcal beta glucoside metabolism investigated by whole genome comparison.</title>
        <authorList>
            <person name="Mulas L."/>
            <person name="Trappetti C."/>
            <person name="Hakenbeck R."/>
            <person name="Iannelli F."/>
            <person name="Pozzi G."/>
            <person name="Davidsen T.M."/>
            <person name="Tettelin H."/>
            <person name="Oggioni M."/>
        </authorList>
    </citation>
    <scope>NUCLEOTIDE SEQUENCE [LARGE SCALE GENOMIC DNA]</scope>
    <source>
        <strain>G54</strain>
    </source>
</reference>